<feature type="chain" id="PRO_0000388222" description="ATPase GET3">
    <location>
        <begin position="1"/>
        <end position="326"/>
    </location>
</feature>
<feature type="active site" evidence="1">
    <location>
        <position position="61"/>
    </location>
</feature>
<feature type="binding site" evidence="1">
    <location>
        <begin position="32"/>
        <end position="39"/>
    </location>
    <ligand>
        <name>ATP</name>
        <dbReference type="ChEBI" id="CHEBI:30616"/>
    </ligand>
</feature>
<feature type="binding site" evidence="1">
    <location>
        <position position="244"/>
    </location>
    <ligand>
        <name>ATP</name>
        <dbReference type="ChEBI" id="CHEBI:30616"/>
    </ligand>
</feature>
<feature type="binding site" evidence="1">
    <location>
        <position position="271"/>
    </location>
    <ligand>
        <name>ATP</name>
        <dbReference type="ChEBI" id="CHEBI:30616"/>
    </ligand>
</feature>
<feature type="binding site" evidence="1">
    <location>
        <position position="282"/>
    </location>
    <ligand>
        <name>Zn(2+)</name>
        <dbReference type="ChEBI" id="CHEBI:29105"/>
        <note>ligand shared between dimeric partners</note>
    </ligand>
</feature>
<feature type="binding site" evidence="1">
    <location>
        <position position="285"/>
    </location>
    <ligand>
        <name>Zn(2+)</name>
        <dbReference type="ChEBI" id="CHEBI:29105"/>
        <note>ligand shared between dimeric partners</note>
    </ligand>
</feature>
<name>GET3_PHANO</name>
<dbReference type="EC" id="3.6.-.-" evidence="1"/>
<dbReference type="EMBL" id="CH445333">
    <property type="protein sequence ID" value="EAT86334.2"/>
    <property type="molecule type" value="Genomic_DNA"/>
</dbReference>
<dbReference type="RefSeq" id="XP_001796873.1">
    <property type="nucleotide sequence ID" value="XM_001796821.1"/>
</dbReference>
<dbReference type="SMR" id="Q0UP11"/>
<dbReference type="FunCoup" id="Q0UP11">
    <property type="interactions" value="910"/>
</dbReference>
<dbReference type="STRING" id="321614.Q0UP11"/>
<dbReference type="EnsemblFungi" id="SNOT_06503">
    <property type="protein sequence ID" value="SNOT_06503"/>
    <property type="gene ID" value="SNOG_06503"/>
</dbReference>
<dbReference type="GeneID" id="5973752"/>
<dbReference type="KEGG" id="pno:SNOG_06503"/>
<dbReference type="VEuPathDB" id="FungiDB:JI435_065030"/>
<dbReference type="eggNOG" id="KOG2825">
    <property type="taxonomic scope" value="Eukaryota"/>
</dbReference>
<dbReference type="HOGENOM" id="CLU_040761_0_0_1"/>
<dbReference type="InParanoid" id="Q0UP11"/>
<dbReference type="Proteomes" id="UP000001055">
    <property type="component" value="Unassembled WGS sequence"/>
</dbReference>
<dbReference type="GO" id="GO:0043529">
    <property type="term" value="C:GET complex"/>
    <property type="evidence" value="ECO:0000318"/>
    <property type="project" value="GO_Central"/>
</dbReference>
<dbReference type="GO" id="GO:0005524">
    <property type="term" value="F:ATP binding"/>
    <property type="evidence" value="ECO:0007669"/>
    <property type="project" value="UniProtKB-UniRule"/>
</dbReference>
<dbReference type="GO" id="GO:0016887">
    <property type="term" value="F:ATP hydrolysis activity"/>
    <property type="evidence" value="ECO:0000318"/>
    <property type="project" value="GO_Central"/>
</dbReference>
<dbReference type="GO" id="GO:0005085">
    <property type="term" value="F:guanyl-nucleotide exchange factor activity"/>
    <property type="evidence" value="ECO:0007669"/>
    <property type="project" value="EnsemblFungi"/>
</dbReference>
<dbReference type="GO" id="GO:0042802">
    <property type="term" value="F:identical protein binding"/>
    <property type="evidence" value="ECO:0007669"/>
    <property type="project" value="EnsemblFungi"/>
</dbReference>
<dbReference type="GO" id="GO:0046872">
    <property type="term" value="F:metal ion binding"/>
    <property type="evidence" value="ECO:0007669"/>
    <property type="project" value="UniProtKB-KW"/>
</dbReference>
<dbReference type="GO" id="GO:0044183">
    <property type="term" value="F:protein folding chaperone"/>
    <property type="evidence" value="ECO:0007669"/>
    <property type="project" value="EnsemblFungi"/>
</dbReference>
<dbReference type="GO" id="GO:0051082">
    <property type="term" value="F:unfolded protein binding"/>
    <property type="evidence" value="ECO:0007669"/>
    <property type="project" value="EnsemblFungi"/>
</dbReference>
<dbReference type="GO" id="GO:0034599">
    <property type="term" value="P:cellular response to oxidative stress"/>
    <property type="evidence" value="ECO:0007669"/>
    <property type="project" value="EnsemblFungi"/>
</dbReference>
<dbReference type="GO" id="GO:0000750">
    <property type="term" value="P:pheromone-dependent signal transduction involved in conjugation with cellular fusion"/>
    <property type="evidence" value="ECO:0007669"/>
    <property type="project" value="EnsemblFungi"/>
</dbReference>
<dbReference type="GO" id="GO:0006620">
    <property type="term" value="P:post-translational protein targeting to endoplasmic reticulum membrane"/>
    <property type="evidence" value="ECO:0007669"/>
    <property type="project" value="EnsemblFungi"/>
</dbReference>
<dbReference type="GO" id="GO:0009408">
    <property type="term" value="P:response to heat"/>
    <property type="evidence" value="ECO:0007669"/>
    <property type="project" value="EnsemblFungi"/>
</dbReference>
<dbReference type="GO" id="GO:0010038">
    <property type="term" value="P:response to metal ion"/>
    <property type="evidence" value="ECO:0007669"/>
    <property type="project" value="EnsemblFungi"/>
</dbReference>
<dbReference type="GO" id="GO:0006890">
    <property type="term" value="P:retrograde vesicle-mediated transport, Golgi to endoplasmic reticulum"/>
    <property type="evidence" value="ECO:0007669"/>
    <property type="project" value="EnsemblFungi"/>
</dbReference>
<dbReference type="GO" id="GO:0071816">
    <property type="term" value="P:tail-anchored membrane protein insertion into ER membrane"/>
    <property type="evidence" value="ECO:0000318"/>
    <property type="project" value="GO_Central"/>
</dbReference>
<dbReference type="CDD" id="cd02035">
    <property type="entry name" value="ArsA"/>
    <property type="match status" value="1"/>
</dbReference>
<dbReference type="FunFam" id="3.40.50.300:FF:000235">
    <property type="entry name" value="ATPase ASNA1"/>
    <property type="match status" value="1"/>
</dbReference>
<dbReference type="Gene3D" id="3.40.50.300">
    <property type="entry name" value="P-loop containing nucleotide triphosphate hydrolases"/>
    <property type="match status" value="1"/>
</dbReference>
<dbReference type="HAMAP" id="MF_03112">
    <property type="entry name" value="Asna1_Get3"/>
    <property type="match status" value="1"/>
</dbReference>
<dbReference type="InterPro" id="IPR025723">
    <property type="entry name" value="Anion-transp_ATPase-like_dom"/>
</dbReference>
<dbReference type="InterPro" id="IPR016300">
    <property type="entry name" value="ATPase_ArsA/GET3"/>
</dbReference>
<dbReference type="InterPro" id="IPR027542">
    <property type="entry name" value="ATPase_ArsA/GET3_euk"/>
</dbReference>
<dbReference type="InterPro" id="IPR027417">
    <property type="entry name" value="P-loop_NTPase"/>
</dbReference>
<dbReference type="NCBIfam" id="TIGR00345">
    <property type="entry name" value="GET3_arsA_TRC40"/>
    <property type="match status" value="1"/>
</dbReference>
<dbReference type="PANTHER" id="PTHR10803">
    <property type="entry name" value="ARSENICAL PUMP-DRIVING ATPASE ARSENITE-TRANSLOCATING ATPASE"/>
    <property type="match status" value="1"/>
</dbReference>
<dbReference type="PANTHER" id="PTHR10803:SF3">
    <property type="entry name" value="ATPASE GET3"/>
    <property type="match status" value="1"/>
</dbReference>
<dbReference type="Pfam" id="PF02374">
    <property type="entry name" value="ArsA_ATPase"/>
    <property type="match status" value="1"/>
</dbReference>
<dbReference type="SUPFAM" id="SSF52540">
    <property type="entry name" value="P-loop containing nucleoside triphosphate hydrolases"/>
    <property type="match status" value="1"/>
</dbReference>
<comment type="function">
    <text evidence="1">ATPase required for the post-translational delivery of tail-anchored (TA) proteins to the endoplasmic reticulum. Recognizes and selectively binds the transmembrane domain of TA proteins in the cytosol. This complex then targets to the endoplasmic reticulum by membrane-bound receptors, where the tail-anchored protein is released for insertion. This process is regulated by ATP binding and hydrolysis. ATP binding drives the homodimer towards the closed dimer state, facilitating recognition of newly synthesized TA membrane proteins. ATP hydrolysis is required for insertion. Subsequently, the homodimer reverts towards the open dimer state, lowering its affinity for the membrane-bound receptor, and returning it to the cytosol to initiate a new round of targeting.</text>
</comment>
<comment type="subunit">
    <text evidence="1">Homodimer.</text>
</comment>
<comment type="subcellular location">
    <subcellularLocation>
        <location evidence="1">Cytoplasm</location>
    </subcellularLocation>
    <subcellularLocation>
        <location evidence="1">Endoplasmic reticulum</location>
    </subcellularLocation>
</comment>
<comment type="similarity">
    <text evidence="1">Belongs to the arsA ATPase family.</text>
</comment>
<accession>Q0UP11</accession>
<reference key="1">
    <citation type="journal article" date="2007" name="Plant Cell">
        <title>Dothideomycete-plant interactions illuminated by genome sequencing and EST analysis of the wheat pathogen Stagonospora nodorum.</title>
        <authorList>
            <person name="Hane J.K."/>
            <person name="Lowe R.G.T."/>
            <person name="Solomon P.S."/>
            <person name="Tan K.-C."/>
            <person name="Schoch C.L."/>
            <person name="Spatafora J.W."/>
            <person name="Crous P.W."/>
            <person name="Kodira C.D."/>
            <person name="Birren B.W."/>
            <person name="Galagan J.E."/>
            <person name="Torriani S.F.F."/>
            <person name="McDonald B.A."/>
            <person name="Oliver R.P."/>
        </authorList>
    </citation>
    <scope>NUCLEOTIDE SEQUENCE [LARGE SCALE GENOMIC DNA]</scope>
    <source>
        <strain>SN15 / ATCC MYA-4574 / FGSC 10173</strain>
    </source>
</reference>
<sequence length="326" mass="36029">MASAALIDSDMEPTLQPILDQKTLRWIFVGGKGGVGKTTTSCSLAIQLAKHRKSVLLISTDPAHNLSDAFNQKFGKDARLINGFDNLSAMEIDPNGSIQDLLAGGGESGEDAMAGLGGMGNMMQDLAFSIPGVDEAMSFAEVLKQVKSMSYEVIIFDTAPTGHTLRFLQFPTVMEKALSKVSQLSRQFGPMLNSFLGGGGRLPNGQNIDELVEKMEALRGTISEVNGQFKDADLTTFVCVCIPEFLSLYETERMIQELNSYEIDTHSIVVNQLLFPKQDNPCEQCNARRKMQKKYLEQIEELYDEFNVVKMPLLVEEVRGKEKLEK</sequence>
<protein>
    <recommendedName>
        <fullName evidence="1">ATPase GET3</fullName>
        <ecNumber evidence="1">3.6.-.-</ecNumber>
    </recommendedName>
    <alternativeName>
        <fullName evidence="1">Arsenical pump-driving ATPase</fullName>
    </alternativeName>
    <alternativeName>
        <fullName evidence="1">Arsenite-stimulated ATPase</fullName>
    </alternativeName>
    <alternativeName>
        <fullName evidence="1">Golgi to ER traffic protein 3</fullName>
    </alternativeName>
    <alternativeName>
        <fullName evidence="1">Guided entry of tail-anchored proteins 3</fullName>
    </alternativeName>
</protein>
<gene>
    <name evidence="1" type="primary">GET3</name>
    <name type="ORF">SNOG_06503</name>
</gene>
<keyword id="KW-0067">ATP-binding</keyword>
<keyword id="KW-0963">Cytoplasm</keyword>
<keyword id="KW-0256">Endoplasmic reticulum</keyword>
<keyword id="KW-0378">Hydrolase</keyword>
<keyword id="KW-0479">Metal-binding</keyword>
<keyword id="KW-0547">Nucleotide-binding</keyword>
<keyword id="KW-0813">Transport</keyword>
<keyword id="KW-0862">Zinc</keyword>
<organism>
    <name type="scientific">Phaeosphaeria nodorum (strain SN15 / ATCC MYA-4574 / FGSC 10173)</name>
    <name type="common">Glume blotch fungus</name>
    <name type="synonym">Parastagonospora nodorum</name>
    <dbReference type="NCBI Taxonomy" id="321614"/>
    <lineage>
        <taxon>Eukaryota</taxon>
        <taxon>Fungi</taxon>
        <taxon>Dikarya</taxon>
        <taxon>Ascomycota</taxon>
        <taxon>Pezizomycotina</taxon>
        <taxon>Dothideomycetes</taxon>
        <taxon>Pleosporomycetidae</taxon>
        <taxon>Pleosporales</taxon>
        <taxon>Pleosporineae</taxon>
        <taxon>Phaeosphaeriaceae</taxon>
        <taxon>Parastagonospora</taxon>
    </lineage>
</organism>
<proteinExistence type="inferred from homology"/>
<evidence type="ECO:0000255" key="1">
    <source>
        <dbReference type="HAMAP-Rule" id="MF_03112"/>
    </source>
</evidence>